<evidence type="ECO:0000255" key="1">
    <source>
        <dbReference type="HAMAP-Rule" id="MF_00758"/>
    </source>
</evidence>
<organism>
    <name type="scientific">Chromohalobacter salexigens (strain ATCC BAA-138 / DSM 3043 / CIP 106854 / NCIMB 13768 / 1H11)</name>
    <dbReference type="NCBI Taxonomy" id="290398"/>
    <lineage>
        <taxon>Bacteria</taxon>
        <taxon>Pseudomonadati</taxon>
        <taxon>Pseudomonadota</taxon>
        <taxon>Gammaproteobacteria</taxon>
        <taxon>Oceanospirillales</taxon>
        <taxon>Halomonadaceae</taxon>
        <taxon>Chromohalobacter</taxon>
    </lineage>
</organism>
<proteinExistence type="inferred from homology"/>
<protein>
    <recommendedName>
        <fullName evidence="1">UPF0301 protein Csal_0058</fullName>
    </recommendedName>
</protein>
<dbReference type="EMBL" id="CP000285">
    <property type="protein sequence ID" value="ABE57422.1"/>
    <property type="molecule type" value="Genomic_DNA"/>
</dbReference>
<dbReference type="RefSeq" id="WP_011505368.1">
    <property type="nucleotide sequence ID" value="NC_007963.1"/>
</dbReference>
<dbReference type="SMR" id="Q1R1I6"/>
<dbReference type="STRING" id="290398.Csal_0058"/>
<dbReference type="GeneID" id="95332810"/>
<dbReference type="KEGG" id="csa:Csal_0058"/>
<dbReference type="eggNOG" id="COG1678">
    <property type="taxonomic scope" value="Bacteria"/>
</dbReference>
<dbReference type="HOGENOM" id="CLU_057596_1_0_6"/>
<dbReference type="OrthoDB" id="9807486at2"/>
<dbReference type="Proteomes" id="UP000000239">
    <property type="component" value="Chromosome"/>
</dbReference>
<dbReference type="GO" id="GO:0005829">
    <property type="term" value="C:cytosol"/>
    <property type="evidence" value="ECO:0007669"/>
    <property type="project" value="TreeGrafter"/>
</dbReference>
<dbReference type="Gene3D" id="3.40.1740.10">
    <property type="entry name" value="VC0467-like"/>
    <property type="match status" value="1"/>
</dbReference>
<dbReference type="HAMAP" id="MF_00758">
    <property type="entry name" value="UPF0301"/>
    <property type="match status" value="1"/>
</dbReference>
<dbReference type="InterPro" id="IPR003774">
    <property type="entry name" value="AlgH-like"/>
</dbReference>
<dbReference type="NCBIfam" id="NF001266">
    <property type="entry name" value="PRK00228.1-1"/>
    <property type="match status" value="1"/>
</dbReference>
<dbReference type="PANTHER" id="PTHR30327">
    <property type="entry name" value="UNCHARACTERIZED PROTEIN YQGE"/>
    <property type="match status" value="1"/>
</dbReference>
<dbReference type="PANTHER" id="PTHR30327:SF1">
    <property type="entry name" value="UPF0301 PROTEIN YQGE"/>
    <property type="match status" value="1"/>
</dbReference>
<dbReference type="Pfam" id="PF02622">
    <property type="entry name" value="DUF179"/>
    <property type="match status" value="1"/>
</dbReference>
<dbReference type="SUPFAM" id="SSF143456">
    <property type="entry name" value="VC0467-like"/>
    <property type="match status" value="1"/>
</dbReference>
<comment type="similarity">
    <text evidence="1">Belongs to the UPF0301 (AlgH) family.</text>
</comment>
<gene>
    <name type="ordered locus">Csal_0058</name>
</gene>
<name>Y058_CHRSD</name>
<sequence>MQSLKHHFLLAMPHLDDPNFKGTLTYLCDHDENGTMGVIVNRPMELTLDALLEQLELDAAECPCREMPVHYGGPVHKDRGFILHRGSSLPWDSSLQVADDIALTTSMDMLKAIANGQGPEDFIVCLGCAAWQAGQLEDELKQNTWLTVEGDASILFEVHAEQRLSAAAGILGIDLNLMSREAGHS</sequence>
<feature type="chain" id="PRO_0000258818" description="UPF0301 protein Csal_0058">
    <location>
        <begin position="1"/>
        <end position="185"/>
    </location>
</feature>
<accession>Q1R1I6</accession>
<reference key="1">
    <citation type="journal article" date="2011" name="Stand. Genomic Sci.">
        <title>Complete genome sequence of the halophilic and highly halotolerant Chromohalobacter salexigens type strain (1H11(T)).</title>
        <authorList>
            <person name="Copeland A."/>
            <person name="O'Connor K."/>
            <person name="Lucas S."/>
            <person name="Lapidus A."/>
            <person name="Berry K.W."/>
            <person name="Detter J.C."/>
            <person name="Del Rio T.G."/>
            <person name="Hammon N."/>
            <person name="Dalin E."/>
            <person name="Tice H."/>
            <person name="Pitluck S."/>
            <person name="Bruce D."/>
            <person name="Goodwin L."/>
            <person name="Han C."/>
            <person name="Tapia R."/>
            <person name="Saunders E."/>
            <person name="Schmutz J."/>
            <person name="Brettin T."/>
            <person name="Larimer F."/>
            <person name="Land M."/>
            <person name="Hauser L."/>
            <person name="Vargas C."/>
            <person name="Nieto J.J."/>
            <person name="Kyrpides N.C."/>
            <person name="Ivanova N."/>
            <person name="Goker M."/>
            <person name="Klenk H.P."/>
            <person name="Csonka L.N."/>
            <person name="Woyke T."/>
        </authorList>
    </citation>
    <scope>NUCLEOTIDE SEQUENCE [LARGE SCALE GENOMIC DNA]</scope>
    <source>
        <strain>ATCC BAA-138 / DSM 3043 / CIP 106854 / NCIMB 13768 / 1H11</strain>
    </source>
</reference>
<keyword id="KW-1185">Reference proteome</keyword>